<proteinExistence type="inferred from homology"/>
<dbReference type="EMBL" id="FM200053">
    <property type="protein sequence ID" value="CAR58829.1"/>
    <property type="molecule type" value="Genomic_DNA"/>
</dbReference>
<dbReference type="RefSeq" id="WP_001197809.1">
    <property type="nucleotide sequence ID" value="NC_011147.1"/>
</dbReference>
<dbReference type="SMR" id="B5BF69"/>
<dbReference type="HOGENOM" id="CLU_002755_1_1_6"/>
<dbReference type="Proteomes" id="UP000001869">
    <property type="component" value="Chromosome"/>
</dbReference>
<dbReference type="GO" id="GO:0005886">
    <property type="term" value="C:plasma membrane"/>
    <property type="evidence" value="ECO:0007669"/>
    <property type="project" value="UniProtKB-SubCell"/>
</dbReference>
<dbReference type="GO" id="GO:0042910">
    <property type="term" value="F:xenobiotic transmembrane transporter activity"/>
    <property type="evidence" value="ECO:0007669"/>
    <property type="project" value="TreeGrafter"/>
</dbReference>
<dbReference type="FunFam" id="1.20.1640.10:FF:000001">
    <property type="entry name" value="Efflux pump membrane transporter"/>
    <property type="match status" value="1"/>
</dbReference>
<dbReference type="FunFam" id="3.30.70.1430:FF:000001">
    <property type="entry name" value="Efflux pump membrane transporter"/>
    <property type="match status" value="1"/>
</dbReference>
<dbReference type="FunFam" id="3.30.2090.10:FF:000003">
    <property type="entry name" value="Multidrug resistance protein MdtB"/>
    <property type="match status" value="1"/>
</dbReference>
<dbReference type="Gene3D" id="3.30.70.1430">
    <property type="entry name" value="Multidrug efflux transporter AcrB pore domain"/>
    <property type="match status" value="2"/>
</dbReference>
<dbReference type="Gene3D" id="3.30.70.1440">
    <property type="entry name" value="Multidrug efflux transporter AcrB pore domain"/>
    <property type="match status" value="1"/>
</dbReference>
<dbReference type="Gene3D" id="3.30.70.1320">
    <property type="entry name" value="Multidrug efflux transporter AcrB pore domain like"/>
    <property type="match status" value="1"/>
</dbReference>
<dbReference type="Gene3D" id="3.30.2090.10">
    <property type="entry name" value="Multidrug efflux transporter AcrB TolC docking domain, DN and DC subdomains"/>
    <property type="match status" value="2"/>
</dbReference>
<dbReference type="Gene3D" id="1.20.1640.10">
    <property type="entry name" value="Multidrug efflux transporter AcrB transmembrane domain"/>
    <property type="match status" value="2"/>
</dbReference>
<dbReference type="HAMAP" id="MF_01423">
    <property type="entry name" value="MdtB"/>
    <property type="match status" value="1"/>
</dbReference>
<dbReference type="InterPro" id="IPR027463">
    <property type="entry name" value="AcrB_DN_DC_subdom"/>
</dbReference>
<dbReference type="InterPro" id="IPR001036">
    <property type="entry name" value="Acrflvin-R"/>
</dbReference>
<dbReference type="InterPro" id="IPR022831">
    <property type="entry name" value="Multidrug-R_MdtB"/>
</dbReference>
<dbReference type="NCBIfam" id="NF007798">
    <property type="entry name" value="PRK10503.1"/>
    <property type="match status" value="1"/>
</dbReference>
<dbReference type="NCBIfam" id="NF033617">
    <property type="entry name" value="RND_permease_2"/>
    <property type="match status" value="1"/>
</dbReference>
<dbReference type="PANTHER" id="PTHR32063">
    <property type="match status" value="1"/>
</dbReference>
<dbReference type="PANTHER" id="PTHR32063:SF21">
    <property type="entry name" value="MULTIDRUG RESISTANCE PROTEIN MDTB"/>
    <property type="match status" value="1"/>
</dbReference>
<dbReference type="Pfam" id="PF00873">
    <property type="entry name" value="ACR_tran"/>
    <property type="match status" value="1"/>
</dbReference>
<dbReference type="PRINTS" id="PR00702">
    <property type="entry name" value="ACRIFLAVINRP"/>
</dbReference>
<dbReference type="SUPFAM" id="SSF82693">
    <property type="entry name" value="Multidrug efflux transporter AcrB pore domain, PN1, PN2, PC1 and PC2 subdomains"/>
    <property type="match status" value="3"/>
</dbReference>
<dbReference type="SUPFAM" id="SSF82714">
    <property type="entry name" value="Multidrug efflux transporter AcrB TolC docking domain, DN and DC subdomains"/>
    <property type="match status" value="2"/>
</dbReference>
<dbReference type="SUPFAM" id="SSF82866">
    <property type="entry name" value="Multidrug efflux transporter AcrB transmembrane domain"/>
    <property type="match status" value="2"/>
</dbReference>
<feature type="chain" id="PRO_1000145663" description="Multidrug resistance protein MdtB">
    <location>
        <begin position="1"/>
        <end position="1040"/>
    </location>
</feature>
<feature type="transmembrane region" description="Helical" evidence="1">
    <location>
        <begin position="25"/>
        <end position="45"/>
    </location>
</feature>
<feature type="transmembrane region" description="Helical" evidence="1">
    <location>
        <begin position="347"/>
        <end position="367"/>
    </location>
</feature>
<feature type="transmembrane region" description="Helical" evidence="1">
    <location>
        <begin position="369"/>
        <end position="389"/>
    </location>
</feature>
<feature type="transmembrane region" description="Helical" evidence="1">
    <location>
        <begin position="396"/>
        <end position="416"/>
    </location>
</feature>
<feature type="transmembrane region" description="Helical" evidence="1">
    <location>
        <begin position="440"/>
        <end position="460"/>
    </location>
</feature>
<feature type="transmembrane region" description="Helical" evidence="1">
    <location>
        <begin position="472"/>
        <end position="492"/>
    </location>
</feature>
<feature type="transmembrane region" description="Helical" evidence="1">
    <location>
        <begin position="537"/>
        <end position="557"/>
    </location>
</feature>
<feature type="transmembrane region" description="Helical" evidence="1">
    <location>
        <begin position="863"/>
        <end position="883"/>
    </location>
</feature>
<feature type="transmembrane region" description="Helical" evidence="1">
    <location>
        <begin position="888"/>
        <end position="908"/>
    </location>
</feature>
<feature type="transmembrane region" description="Helical" evidence="1">
    <location>
        <begin position="910"/>
        <end position="930"/>
    </location>
</feature>
<feature type="transmembrane region" description="Helical" evidence="1">
    <location>
        <begin position="968"/>
        <end position="988"/>
    </location>
</feature>
<feature type="transmembrane region" description="Helical" evidence="1">
    <location>
        <begin position="998"/>
        <end position="1018"/>
    </location>
</feature>
<evidence type="ECO:0000255" key="1">
    <source>
        <dbReference type="HAMAP-Rule" id="MF_01423"/>
    </source>
</evidence>
<gene>
    <name evidence="1" type="primary">mdtB</name>
    <name type="ordered locus">SSPA0697</name>
</gene>
<keyword id="KW-0997">Cell inner membrane</keyword>
<keyword id="KW-1003">Cell membrane</keyword>
<keyword id="KW-0472">Membrane</keyword>
<keyword id="KW-0812">Transmembrane</keyword>
<keyword id="KW-1133">Transmembrane helix</keyword>
<keyword id="KW-0813">Transport</keyword>
<protein>
    <recommendedName>
        <fullName evidence="1">Multidrug resistance protein MdtB</fullName>
    </recommendedName>
    <alternativeName>
        <fullName evidence="1">Multidrug transporter MdtB</fullName>
    </alternativeName>
</protein>
<reference key="1">
    <citation type="journal article" date="2009" name="BMC Genomics">
        <title>Pseudogene accumulation in the evolutionary histories of Salmonella enterica serovars Paratyphi A and Typhi.</title>
        <authorList>
            <person name="Holt K.E."/>
            <person name="Thomson N.R."/>
            <person name="Wain J."/>
            <person name="Langridge G.C."/>
            <person name="Hasan R."/>
            <person name="Bhutta Z.A."/>
            <person name="Quail M.A."/>
            <person name="Norbertczak H."/>
            <person name="Walker D."/>
            <person name="Simmonds M."/>
            <person name="White B."/>
            <person name="Bason N."/>
            <person name="Mungall K."/>
            <person name="Dougan G."/>
            <person name="Parkhill J."/>
        </authorList>
    </citation>
    <scope>NUCLEOTIDE SEQUENCE [LARGE SCALE GENOMIC DNA]</scope>
    <source>
        <strain>AKU_12601</strain>
    </source>
</reference>
<organism>
    <name type="scientific">Salmonella paratyphi A (strain AKU_12601)</name>
    <dbReference type="NCBI Taxonomy" id="554290"/>
    <lineage>
        <taxon>Bacteria</taxon>
        <taxon>Pseudomonadati</taxon>
        <taxon>Pseudomonadota</taxon>
        <taxon>Gammaproteobacteria</taxon>
        <taxon>Enterobacterales</taxon>
        <taxon>Enterobacteriaceae</taxon>
        <taxon>Salmonella</taxon>
    </lineage>
</organism>
<name>MDTB_SALPK</name>
<sequence>MQVLPPGSTGGPSRLFILRPVATTLLMAAILLAGIIGYRFLPVAALPEVDYPTIQVVTLYPGASPDVMTSSVTAPLERQFGQMSGLKQMSSQSSGGASVVTLQFQLTLPLDVAEQEVQAAINAATNLLPSDLPNPPIYSKVNPADPPIMTLAVTSNAMPMTQVEDMVETRVAQKISQVSGVGLVTLAGGQRPAIRVKLNAQAIAALGLTSETVRTAITGANVNSAKGSLDGPERAVTLSANDQMQSADEYRKLIIAYQNGAPVRLGDVATVEQGAENSWLGAWANQAPAIVMNVQRQPGANIIATADSIRQMLPQLTESLPKSVKVTVLSDRTTNIRASVRDTQFELMLAIALVVMIIYLFLRNIPATIIPGVAVPLSLIGTFAVMVFLDFSINNLTLMALTIATGFVVDDAIVVIENISRYIEKGEKPLAAALKGAGEIGFTIISLTFSLIAVLIPLLFMGDIVGRLFREFAVTLAVAILISAVVSLTLTPMMCACMLSQQSLRKQNRFSRACERMFDRVIASYGRGLAKVLNHPWLTLSVAFATLLLSVMLWIVIPKGFFPVQDNGIIQGTLQAPQSSSYASMAQRQRQVAERILQDPAVQSLTTFVGVDGANPTLNSARLQINLKPLDARDDRVQQVISRLQTAVATIPVVALYLQPTQDLTIDTQVSRTQYQFTLQATTLDALSHWVPKLQNALQSLPQLSEVSSDWQDRGLAAWVNVDRDSASRLGISIADVDNALYNAFGQRLISTIYTQANQYRVVLEHNTASTPGLAALETIRLTSRDGGTVSLSAIARIEQRFAPLSINHLDQFPVTTFSFNVPEGYSLGDAVQAILDTEKTLALPADITTQFQGSTLAFQAALGSTVWLIVAAVVAMYIVLGVLYESFIHPITILSTLPTAGVGALLALIIAGSELDIIAIIGIILLIGIVKKNAIMMIDFALAAEREQGMSPRDAIFQACLLRFRPILMTTLAALLGALPLMLSTGVGAELRRPLGIAMVGGLLVSQVLTLFTTPVIYLLFDRLSLYVKSRFPRHKEEA</sequence>
<comment type="subunit">
    <text evidence="1">Part of a tripartite efflux system composed of MdtA, MdtB and MdtC. MdtB forms a heteromultimer with MdtC.</text>
</comment>
<comment type="subcellular location">
    <subcellularLocation>
        <location evidence="1">Cell inner membrane</location>
        <topology evidence="1">Multi-pass membrane protein</topology>
    </subcellularLocation>
</comment>
<comment type="similarity">
    <text evidence="1">Belongs to the resistance-nodulation-cell division (RND) (TC 2.A.6) family. MdtB subfamily.</text>
</comment>
<accession>B5BF69</accession>